<dbReference type="EMBL" id="X76053">
    <property type="protein sequence ID" value="CAA53651.1"/>
    <property type="molecule type" value="Genomic_DNA"/>
</dbReference>
<dbReference type="EMBL" id="Z36157">
    <property type="protein sequence ID" value="CAA85253.1"/>
    <property type="molecule type" value="Genomic_DNA"/>
</dbReference>
<dbReference type="EMBL" id="BK006936">
    <property type="protein sequence ID" value="DAA07403.2"/>
    <property type="molecule type" value="Genomic_DNA"/>
</dbReference>
<dbReference type="PIR" id="S44550">
    <property type="entry name" value="S44550"/>
</dbReference>
<dbReference type="RefSeq" id="NP_009847.4">
    <property type="nucleotide sequence ID" value="NM_001178636.4"/>
</dbReference>
<dbReference type="PDB" id="7P3X">
    <property type="method" value="EM"/>
    <property type="resolution" value="9.10 A"/>
    <property type="chains" value="M=1-483"/>
</dbReference>
<dbReference type="PDB" id="7P3Y">
    <property type="method" value="EM"/>
    <property type="resolution" value="10.10 A"/>
    <property type="chains" value="M=1-483"/>
</dbReference>
<dbReference type="PDB" id="7P3Z">
    <property type="method" value="EM"/>
    <property type="resolution" value="10.50 A"/>
    <property type="chains" value="M=1-483"/>
</dbReference>
<dbReference type="PDBsum" id="7P3X"/>
<dbReference type="PDBsum" id="7P3Y"/>
<dbReference type="PDBsum" id="7P3Z"/>
<dbReference type="EMDB" id="EMD-13187"/>
<dbReference type="EMDB" id="EMD-13188"/>
<dbReference type="EMDB" id="EMD-13189"/>
<dbReference type="SMR" id="P38153"/>
<dbReference type="BioGRID" id="32982">
    <property type="interactions" value="240"/>
</dbReference>
<dbReference type="ComplexPortal" id="CPX-535">
    <property type="entry name" value="Adapter complex AP-3"/>
</dbReference>
<dbReference type="DIP" id="DIP-4965N"/>
<dbReference type="FunCoup" id="P38153">
    <property type="interactions" value="181"/>
</dbReference>
<dbReference type="IntAct" id="P38153">
    <property type="interactions" value="32"/>
</dbReference>
<dbReference type="MINT" id="P38153"/>
<dbReference type="STRING" id="4932.YBR288C"/>
<dbReference type="iPTMnet" id="P38153"/>
<dbReference type="PaxDb" id="4932-YBR288C"/>
<dbReference type="PeptideAtlas" id="P38153"/>
<dbReference type="EnsemblFungi" id="YBR288C_mRNA">
    <property type="protein sequence ID" value="YBR288C"/>
    <property type="gene ID" value="YBR288C"/>
</dbReference>
<dbReference type="GeneID" id="852591"/>
<dbReference type="KEGG" id="sce:YBR288C"/>
<dbReference type="AGR" id="SGD:S000000492"/>
<dbReference type="SGD" id="S000000492">
    <property type="gene designation" value="APM3"/>
</dbReference>
<dbReference type="VEuPathDB" id="FungiDB:YBR288C"/>
<dbReference type="eggNOG" id="KOG2740">
    <property type="taxonomic scope" value="Eukaryota"/>
</dbReference>
<dbReference type="HOGENOM" id="CLU_026449_0_0_1"/>
<dbReference type="InParanoid" id="P38153"/>
<dbReference type="OMA" id="LNEMCDG"/>
<dbReference type="OrthoDB" id="870at2759"/>
<dbReference type="BioCyc" id="YEAST:G3O-29207-MONOMER"/>
<dbReference type="BioGRID-ORCS" id="852591">
    <property type="hits" value="0 hits in 10 CRISPR screens"/>
</dbReference>
<dbReference type="PRO" id="PR:P38153"/>
<dbReference type="Proteomes" id="UP000002311">
    <property type="component" value="Chromosome II"/>
</dbReference>
<dbReference type="RNAct" id="P38153">
    <property type="molecule type" value="protein"/>
</dbReference>
<dbReference type="GO" id="GO:0030123">
    <property type="term" value="C:AP-3 adaptor complex"/>
    <property type="evidence" value="ECO:0000314"/>
    <property type="project" value="SGD"/>
</dbReference>
<dbReference type="GO" id="GO:0030131">
    <property type="term" value="C:clathrin adaptor complex"/>
    <property type="evidence" value="ECO:0007669"/>
    <property type="project" value="InterPro"/>
</dbReference>
<dbReference type="GO" id="GO:0031410">
    <property type="term" value="C:cytoplasmic vesicle"/>
    <property type="evidence" value="ECO:0000318"/>
    <property type="project" value="GO_Central"/>
</dbReference>
<dbReference type="GO" id="GO:0030659">
    <property type="term" value="C:cytoplasmic vesicle membrane"/>
    <property type="evidence" value="ECO:0007669"/>
    <property type="project" value="UniProtKB-SubCell"/>
</dbReference>
<dbReference type="GO" id="GO:0005794">
    <property type="term" value="C:Golgi apparatus"/>
    <property type="evidence" value="ECO:0007669"/>
    <property type="project" value="UniProtKB-SubCell"/>
</dbReference>
<dbReference type="GO" id="GO:0006897">
    <property type="term" value="P:endocytosis"/>
    <property type="evidence" value="ECO:0000318"/>
    <property type="project" value="GO_Central"/>
</dbReference>
<dbReference type="GO" id="GO:0006896">
    <property type="term" value="P:Golgi to vacuole transport"/>
    <property type="evidence" value="ECO:0000315"/>
    <property type="project" value="ComplexPortal"/>
</dbReference>
<dbReference type="GO" id="GO:0006886">
    <property type="term" value="P:intracellular protein transport"/>
    <property type="evidence" value="ECO:0000303"/>
    <property type="project" value="ComplexPortal"/>
</dbReference>
<dbReference type="GO" id="GO:0006623">
    <property type="term" value="P:protein targeting to vacuole"/>
    <property type="evidence" value="ECO:0000315"/>
    <property type="project" value="SGD"/>
</dbReference>
<dbReference type="Gene3D" id="3.30.450.60">
    <property type="match status" value="1"/>
</dbReference>
<dbReference type="Gene3D" id="2.60.40.1170">
    <property type="entry name" value="Mu homology domain, subdomain B"/>
    <property type="match status" value="2"/>
</dbReference>
<dbReference type="InterPro" id="IPR050431">
    <property type="entry name" value="Adaptor_comp_med_subunit"/>
</dbReference>
<dbReference type="InterPro" id="IPR036168">
    <property type="entry name" value="AP2_Mu_C_sf"/>
</dbReference>
<dbReference type="InterPro" id="IPR001392">
    <property type="entry name" value="Clathrin_mu"/>
</dbReference>
<dbReference type="InterPro" id="IPR018240">
    <property type="entry name" value="Clathrin_mu_CS"/>
</dbReference>
<dbReference type="InterPro" id="IPR028565">
    <property type="entry name" value="MHD"/>
</dbReference>
<dbReference type="PANTHER" id="PTHR10529">
    <property type="entry name" value="AP COMPLEX SUBUNIT MU"/>
    <property type="match status" value="1"/>
</dbReference>
<dbReference type="Pfam" id="PF00928">
    <property type="entry name" value="Adap_comp_sub"/>
    <property type="match status" value="1"/>
</dbReference>
<dbReference type="PIRSF" id="PIRSF005992">
    <property type="entry name" value="Clathrin_mu"/>
    <property type="match status" value="1"/>
</dbReference>
<dbReference type="SUPFAM" id="SSF49447">
    <property type="entry name" value="Second domain of Mu2 adaptin subunit (ap50) of ap2 adaptor"/>
    <property type="match status" value="1"/>
</dbReference>
<dbReference type="PROSITE" id="PS00990">
    <property type="entry name" value="CLAT_ADAPTOR_M_1"/>
    <property type="match status" value="1"/>
</dbReference>
<dbReference type="PROSITE" id="PS00991">
    <property type="entry name" value="CLAT_ADAPTOR_M_2"/>
    <property type="match status" value="1"/>
</dbReference>
<dbReference type="PROSITE" id="PS51072">
    <property type="entry name" value="MHD"/>
    <property type="match status" value="1"/>
</dbReference>
<feature type="chain" id="PRO_0000193794" description="AP-3 complex subunit mu">
    <location>
        <begin position="1"/>
        <end position="483"/>
    </location>
</feature>
<feature type="domain" description="MHD" evidence="1">
    <location>
        <begin position="211"/>
        <end position="482"/>
    </location>
</feature>
<feature type="sequence conflict" description="In Ref. 1; CAA53651 and 2; CAA85253." evidence="7" ref="1 2">
    <original>QS</original>
    <variation>RT</variation>
    <location>
        <begin position="35"/>
        <end position="36"/>
    </location>
</feature>
<protein>
    <recommendedName>
        <fullName>AP-3 complex subunit mu</fullName>
    </recommendedName>
    <alternativeName>
        <fullName>AP-3 adaptor complex mu3A subunit</fullName>
    </alternativeName>
    <alternativeName>
        <fullName>Adaptor-related protein complex 3 subunit mu</fullName>
    </alternativeName>
    <alternativeName>
        <fullName>Mu-adaptin 3A</fullName>
    </alternativeName>
    <alternativeName>
        <fullName>Mu3-adaptin</fullName>
    </alternativeName>
</protein>
<sequence length="483" mass="54837">MYLSFYITDTKNKLIFQYLLGATAPSFKHLWTRVQSTCPQLLEDSSSDDYLDHSMVGRDLEVYKYFSVINKLNYWCLASTSKSKGPLDCFTFLETIDRILLEYFDKDKLSIKKIVNNYDRISLIFNCCVEAGEPNVSDMLYVNKIKEAVPERSDLSKFISSTAHNLQQAVQLPQQRQQQLQQNQISRGSNSLIENEEIVPWRTSRASKHENNELYVDLLETFHVVFEKKKSHLRLLTGSIHGIVDVRSYLNDNPLVAVKLNTMGNDIGIPSLHDCVEINDGVFSPSNITFIPPDGKFRLLEYSVDLSSQVKQSGVRMNSIGLMSLHFQNGLGKDSDEFELSLNIENFKKVSQVDDLKIDLQFNVENADPNEIAYKIKILRNTHGRFENSIIMGQGQWIFDKSTATGTVPVLRGCIEYENTGPNFTKKVDLQTVSLEYSYIGQSASGIYVEAIDIVSGLTIGKNTKLYKGAKYKTQTGNFQVRL</sequence>
<name>AP3M_YEAST</name>
<organism>
    <name type="scientific">Saccharomyces cerevisiae (strain ATCC 204508 / S288c)</name>
    <name type="common">Baker's yeast</name>
    <dbReference type="NCBI Taxonomy" id="559292"/>
    <lineage>
        <taxon>Eukaryota</taxon>
        <taxon>Fungi</taxon>
        <taxon>Dikarya</taxon>
        <taxon>Ascomycota</taxon>
        <taxon>Saccharomycotina</taxon>
        <taxon>Saccharomycetes</taxon>
        <taxon>Saccharomycetales</taxon>
        <taxon>Saccharomycetaceae</taxon>
        <taxon>Saccharomyces</taxon>
    </lineage>
</organism>
<accession>P38153</accession>
<accession>D6VQT3</accession>
<keyword id="KW-0002">3D-structure</keyword>
<keyword id="KW-0968">Cytoplasmic vesicle</keyword>
<keyword id="KW-0333">Golgi apparatus</keyword>
<keyword id="KW-0472">Membrane</keyword>
<keyword id="KW-0653">Protein transport</keyword>
<keyword id="KW-1185">Reference proteome</keyword>
<keyword id="KW-0813">Transport</keyword>
<reference key="1">
    <citation type="journal article" date="1994" name="Yeast">
        <title>The sequence of a 32,420 bp segment located on the right arm of chromosome II from Saccharomyces cerevisiae.</title>
        <authorList>
            <person name="Holmstroem K."/>
            <person name="Brandt T."/>
            <person name="Kallesoe T."/>
        </authorList>
    </citation>
    <scope>NUCLEOTIDE SEQUENCE [GENOMIC DNA]</scope>
    <source>
        <strain>ATCC 204508 / S288c</strain>
    </source>
</reference>
<reference key="2">
    <citation type="journal article" date="1994" name="EMBO J.">
        <title>Complete DNA sequence of yeast chromosome II.</title>
        <authorList>
            <person name="Feldmann H."/>
            <person name="Aigle M."/>
            <person name="Aljinovic G."/>
            <person name="Andre B."/>
            <person name="Baclet M.C."/>
            <person name="Barthe C."/>
            <person name="Baur A."/>
            <person name="Becam A.-M."/>
            <person name="Biteau N."/>
            <person name="Boles E."/>
            <person name="Brandt T."/>
            <person name="Brendel M."/>
            <person name="Brueckner M."/>
            <person name="Bussereau F."/>
            <person name="Christiansen C."/>
            <person name="Contreras R."/>
            <person name="Crouzet M."/>
            <person name="Cziepluch C."/>
            <person name="Demolis N."/>
            <person name="Delaveau T."/>
            <person name="Doignon F."/>
            <person name="Domdey H."/>
            <person name="Duesterhus S."/>
            <person name="Dubois E."/>
            <person name="Dujon B."/>
            <person name="El Bakkoury M."/>
            <person name="Entian K.-D."/>
            <person name="Feuermann M."/>
            <person name="Fiers W."/>
            <person name="Fobo G.M."/>
            <person name="Fritz C."/>
            <person name="Gassenhuber J."/>
            <person name="Glansdorff N."/>
            <person name="Goffeau A."/>
            <person name="Grivell L.A."/>
            <person name="de Haan M."/>
            <person name="Hein C."/>
            <person name="Herbert C.J."/>
            <person name="Hollenberg C.P."/>
            <person name="Holmstroem K."/>
            <person name="Jacq C."/>
            <person name="Jacquet M."/>
            <person name="Jauniaux J.-C."/>
            <person name="Jonniaux J.-L."/>
            <person name="Kallesoee T."/>
            <person name="Kiesau P."/>
            <person name="Kirchrath L."/>
            <person name="Koetter P."/>
            <person name="Korol S."/>
            <person name="Liebl S."/>
            <person name="Logghe M."/>
            <person name="Lohan A.J.E."/>
            <person name="Louis E.J."/>
            <person name="Li Z.Y."/>
            <person name="Maat M.J."/>
            <person name="Mallet L."/>
            <person name="Mannhaupt G."/>
            <person name="Messenguy F."/>
            <person name="Miosga T."/>
            <person name="Molemans F."/>
            <person name="Mueller S."/>
            <person name="Nasr F."/>
            <person name="Obermaier B."/>
            <person name="Perea J."/>
            <person name="Pierard A."/>
            <person name="Piravandi E."/>
            <person name="Pohl F.M."/>
            <person name="Pohl T.M."/>
            <person name="Potier S."/>
            <person name="Proft M."/>
            <person name="Purnelle B."/>
            <person name="Ramezani Rad M."/>
            <person name="Rieger M."/>
            <person name="Rose M."/>
            <person name="Schaaff-Gerstenschlaeger I."/>
            <person name="Scherens B."/>
            <person name="Schwarzlose C."/>
            <person name="Skala J."/>
            <person name="Slonimski P.P."/>
            <person name="Smits P.H.M."/>
            <person name="Souciet J.-L."/>
            <person name="Steensma H.Y."/>
            <person name="Stucka R."/>
            <person name="Urrestarazu L.A."/>
            <person name="van der Aart Q.J.M."/>
            <person name="Van Dyck L."/>
            <person name="Vassarotti A."/>
            <person name="Vetter I."/>
            <person name="Vierendeels F."/>
            <person name="Vissers S."/>
            <person name="Wagner G."/>
            <person name="de Wergifosse P."/>
            <person name="Wolfe K.H."/>
            <person name="Zagulski M."/>
            <person name="Zimmermann F.K."/>
            <person name="Mewes H.-W."/>
            <person name="Kleine K."/>
        </authorList>
    </citation>
    <scope>NUCLEOTIDE SEQUENCE [LARGE SCALE GENOMIC DNA]</scope>
    <source>
        <strain>ATCC 204508 / S288c</strain>
    </source>
</reference>
<reference key="3">
    <citation type="journal article" date="2014" name="G3 (Bethesda)">
        <title>The reference genome sequence of Saccharomyces cerevisiae: Then and now.</title>
        <authorList>
            <person name="Engel S.R."/>
            <person name="Dietrich F.S."/>
            <person name="Fisk D.G."/>
            <person name="Binkley G."/>
            <person name="Balakrishnan R."/>
            <person name="Costanzo M.C."/>
            <person name="Dwight S.S."/>
            <person name="Hitz B.C."/>
            <person name="Karra K."/>
            <person name="Nash R.S."/>
            <person name="Weng S."/>
            <person name="Wong E.D."/>
            <person name="Lloyd P."/>
            <person name="Skrzypek M.S."/>
            <person name="Miyasato S.R."/>
            <person name="Simison M."/>
            <person name="Cherry J.M."/>
        </authorList>
    </citation>
    <scope>GENOME REANNOTATION</scope>
    <scope>SEQUENCE REVISION TO 35-36</scope>
    <source>
        <strain>ATCC 204508 / S288c</strain>
    </source>
</reference>
<reference key="4">
    <citation type="journal article" date="1997" name="Cell">
        <title>The AP-3 adaptor complex is essential for cargo-selective transport to the yeast vacuole.</title>
        <authorList>
            <person name="Cowles C.R."/>
            <person name="Odorizzi G."/>
            <person name="Payne G.S."/>
            <person name="Emr S.D."/>
        </authorList>
    </citation>
    <scope>IDENTIFICATION OF THE AP-3 COMPLEX</scope>
    <scope>FUNCTION OF THE AP-3 COMPLEX</scope>
</reference>
<reference key="5">
    <citation type="journal article" date="1997" name="EMBO J.">
        <title>Suppressors of YCK-encoded yeast casein kinase 1 deficiency define the four subunits of a novel clathrin AP-like complex.</title>
        <authorList>
            <person name="Panek H.R."/>
            <person name="Stepp J.D."/>
            <person name="Engle H.M."/>
            <person name="Marks K.M."/>
            <person name="Tan P.K."/>
            <person name="Lemmon S.K."/>
            <person name="Robinson L.C."/>
        </authorList>
    </citation>
    <scope>IDENTIFICATION OF THE AP-3 COMPLEX</scope>
    <scope>FUNCTION OF THE AP-3 COMPLEX</scope>
</reference>
<reference key="6">
    <citation type="journal article" date="1999" name="Nat. Cell Biol.">
        <title>Formation of AP-3 transport intermediates requires Vps41 function.</title>
        <authorList>
            <person name="Rehling P."/>
            <person name="Darsow T."/>
            <person name="Katzmann D.J."/>
            <person name="Emr S.D."/>
        </authorList>
    </citation>
    <scope>SUBCELLULAR LOCATION</scope>
    <scope>FUNCTION OF THE AP-3 COMPLEX</scope>
</reference>
<reference key="7">
    <citation type="journal article" date="2003" name="Nature">
        <title>Global analysis of protein localization in budding yeast.</title>
        <authorList>
            <person name="Huh W.-K."/>
            <person name="Falvo J.V."/>
            <person name="Gerke L.C."/>
            <person name="Carroll A.S."/>
            <person name="Howson R.W."/>
            <person name="Weissman J.S."/>
            <person name="O'Shea E.K."/>
        </authorList>
    </citation>
    <scope>SUBCELLULAR LOCATION [LARGE SCALE ANALYSIS]</scope>
</reference>
<reference key="8">
    <citation type="journal article" date="2003" name="Nature">
        <title>Global analysis of protein expression in yeast.</title>
        <authorList>
            <person name="Ghaemmaghami S."/>
            <person name="Huh W.-K."/>
            <person name="Bower K."/>
            <person name="Howson R.W."/>
            <person name="Belle A."/>
            <person name="Dephoure N."/>
            <person name="O'Shea E.K."/>
            <person name="Weissman J.S."/>
        </authorList>
    </citation>
    <scope>LEVEL OF PROTEIN EXPRESSION [LARGE SCALE ANALYSIS]</scope>
</reference>
<evidence type="ECO:0000255" key="1">
    <source>
        <dbReference type="PROSITE-ProRule" id="PRU00404"/>
    </source>
</evidence>
<evidence type="ECO:0000269" key="2">
    <source>
    </source>
</evidence>
<evidence type="ECO:0000269" key="3">
    <source>
    </source>
</evidence>
<evidence type="ECO:0000269" key="4">
    <source>
    </source>
</evidence>
<evidence type="ECO:0000269" key="5">
    <source>
    </source>
</evidence>
<evidence type="ECO:0000269" key="6">
    <source>
    </source>
</evidence>
<evidence type="ECO:0000305" key="7"/>
<comment type="function">
    <text evidence="2 5 6">Part of the AP-3 complex, an adaptor-related complex which is not clathrin-associated. The complex is associated with the Golgi region as well as more peripheral structures. It facilitates the budding of vesicles from the Golgi membrane and may be directly involved in trafficking to the vacuole. Required for the transport via the ALP pathway, which directs the transport of the cargo proteins PHO8 and VAM3 to the vacuole.</text>
</comment>
<comment type="subunit">
    <text>Adaptor protein complex 3 (AP-3) is a heterotetramer composed of 2 large adaptins (APL5 and APL6), a medium adaptin (APM3) and a small adaptin (APS3).</text>
</comment>
<comment type="interaction">
    <interactant intactId="EBI-2710">
        <id>P38153</id>
    </interactant>
    <interactant intactId="EBI-29702">
        <id>Q08951</id>
        <label>APL5</label>
    </interactant>
    <organismsDiffer>false</organismsDiffer>
    <experiments>5</experiments>
</comment>
<comment type="interaction">
    <interactant intactId="EBI-2710">
        <id>P38153</id>
    </interactant>
    <interactant intactId="EBI-2213">
        <id>P46682</id>
        <label>APL6</label>
    </interactant>
    <organismsDiffer>false</organismsDiffer>
    <experiments>6</experiments>
</comment>
<comment type="subcellular location">
    <subcellularLocation>
        <location evidence="2 3">Golgi apparatus</location>
    </subcellularLocation>
    <subcellularLocation>
        <location evidence="2 7">Cytoplasmic vesicle membrane</location>
        <topology evidence="2 7">Peripheral membrane protein</topology>
        <orientation evidence="3 7">Cytoplasmic side</orientation>
    </subcellularLocation>
    <text evidence="2 7">Component of the coat surrounding the cytoplasmic face of coated vesicles located at the Golgi complex.</text>
</comment>
<comment type="miscellaneous">
    <text evidence="4">Present with 3410 molecules/cell in log phase SD medium.</text>
</comment>
<comment type="similarity">
    <text evidence="7">Belongs to the adaptor complexes medium subunit family.</text>
</comment>
<gene>
    <name type="primary">APM3</name>
    <name type="synonym">YKS6</name>
    <name type="ordered locus">YBR288C</name>
    <name type="ORF">YBR2035</name>
</gene>
<proteinExistence type="evidence at protein level"/>